<sequence>MKFVDEATIEVIAGKGGNGVASFRREKFIPKGGPDGGDGGRGGSIYAVADRNINTLIDFRYARLHRAKNGENGRGSDQYGAAAPDITLRVPVGTVVHDADTGEVLFDLDRHDQKVTLAAGGAGGMGNIHFKSSTNRAPRQWTPGKEGEQRRLRMELKVLADVGLLGLPNAGKSTLISRISNARPKIADYPFTTLHPNLGVVRTSPSRSFVVADIPGLIEGASEGAGLGHLFLRHLARTRVLLHLVDISSPDPEADPIEQAVVDANAIVEELRRYDPELAAKPRWLVLNKLDMVPDAQDAQQRFCAEFGWTGPVFAISGLNGEGTQDLIWALQDYLDAEKRKDQDAQDQADGTYVFEDPRFDASRGGAAPATPPGGDE</sequence>
<accession>Q7WQL8</accession>
<feature type="chain" id="PRO_0000385749" description="GTPase Obg">
    <location>
        <begin position="1"/>
        <end position="377"/>
    </location>
</feature>
<feature type="domain" description="Obg" evidence="2">
    <location>
        <begin position="1"/>
        <end position="159"/>
    </location>
</feature>
<feature type="domain" description="OBG-type G" evidence="1">
    <location>
        <begin position="160"/>
        <end position="336"/>
    </location>
</feature>
<feature type="region of interest" description="Disordered" evidence="3">
    <location>
        <begin position="127"/>
        <end position="148"/>
    </location>
</feature>
<feature type="region of interest" description="Disordered" evidence="3">
    <location>
        <begin position="339"/>
        <end position="377"/>
    </location>
</feature>
<feature type="binding site" evidence="1">
    <location>
        <begin position="166"/>
        <end position="173"/>
    </location>
    <ligand>
        <name>GTP</name>
        <dbReference type="ChEBI" id="CHEBI:37565"/>
    </ligand>
</feature>
<feature type="binding site" evidence="1">
    <location>
        <position position="173"/>
    </location>
    <ligand>
        <name>Mg(2+)</name>
        <dbReference type="ChEBI" id="CHEBI:18420"/>
    </ligand>
</feature>
<feature type="binding site" evidence="1">
    <location>
        <begin position="191"/>
        <end position="195"/>
    </location>
    <ligand>
        <name>GTP</name>
        <dbReference type="ChEBI" id="CHEBI:37565"/>
    </ligand>
</feature>
<feature type="binding site" evidence="1">
    <location>
        <position position="193"/>
    </location>
    <ligand>
        <name>Mg(2+)</name>
        <dbReference type="ChEBI" id="CHEBI:18420"/>
    </ligand>
</feature>
<feature type="binding site" evidence="1">
    <location>
        <begin position="213"/>
        <end position="216"/>
    </location>
    <ligand>
        <name>GTP</name>
        <dbReference type="ChEBI" id="CHEBI:37565"/>
    </ligand>
</feature>
<feature type="binding site" evidence="1">
    <location>
        <begin position="288"/>
        <end position="291"/>
    </location>
    <ligand>
        <name>GTP</name>
        <dbReference type="ChEBI" id="CHEBI:37565"/>
    </ligand>
</feature>
<feature type="binding site" evidence="1">
    <location>
        <begin position="317"/>
        <end position="319"/>
    </location>
    <ligand>
        <name>GTP</name>
        <dbReference type="ChEBI" id="CHEBI:37565"/>
    </ligand>
</feature>
<evidence type="ECO:0000255" key="1">
    <source>
        <dbReference type="HAMAP-Rule" id="MF_01454"/>
    </source>
</evidence>
<evidence type="ECO:0000255" key="2">
    <source>
        <dbReference type="PROSITE-ProRule" id="PRU01231"/>
    </source>
</evidence>
<evidence type="ECO:0000256" key="3">
    <source>
        <dbReference type="SAM" id="MobiDB-lite"/>
    </source>
</evidence>
<dbReference type="EC" id="3.6.5.-" evidence="1"/>
<dbReference type="EMBL" id="BX640437">
    <property type="protein sequence ID" value="CAE30810.1"/>
    <property type="molecule type" value="Genomic_DNA"/>
</dbReference>
<dbReference type="SMR" id="Q7WQL8"/>
<dbReference type="KEGG" id="bbr:BB0312"/>
<dbReference type="eggNOG" id="COG0536">
    <property type="taxonomic scope" value="Bacteria"/>
</dbReference>
<dbReference type="HOGENOM" id="CLU_011747_2_0_4"/>
<dbReference type="Proteomes" id="UP000001027">
    <property type="component" value="Chromosome"/>
</dbReference>
<dbReference type="GO" id="GO:0005737">
    <property type="term" value="C:cytoplasm"/>
    <property type="evidence" value="ECO:0007669"/>
    <property type="project" value="UniProtKB-SubCell"/>
</dbReference>
<dbReference type="GO" id="GO:0005525">
    <property type="term" value="F:GTP binding"/>
    <property type="evidence" value="ECO:0007669"/>
    <property type="project" value="UniProtKB-UniRule"/>
</dbReference>
<dbReference type="GO" id="GO:0003924">
    <property type="term" value="F:GTPase activity"/>
    <property type="evidence" value="ECO:0007669"/>
    <property type="project" value="UniProtKB-UniRule"/>
</dbReference>
<dbReference type="GO" id="GO:0000287">
    <property type="term" value="F:magnesium ion binding"/>
    <property type="evidence" value="ECO:0007669"/>
    <property type="project" value="InterPro"/>
</dbReference>
<dbReference type="GO" id="GO:0042254">
    <property type="term" value="P:ribosome biogenesis"/>
    <property type="evidence" value="ECO:0007669"/>
    <property type="project" value="UniProtKB-UniRule"/>
</dbReference>
<dbReference type="CDD" id="cd01898">
    <property type="entry name" value="Obg"/>
    <property type="match status" value="1"/>
</dbReference>
<dbReference type="FunFam" id="2.70.210.12:FF:000001">
    <property type="entry name" value="GTPase Obg"/>
    <property type="match status" value="1"/>
</dbReference>
<dbReference type="Gene3D" id="2.70.210.12">
    <property type="entry name" value="GTP1/OBG domain"/>
    <property type="match status" value="1"/>
</dbReference>
<dbReference type="Gene3D" id="3.40.50.300">
    <property type="entry name" value="P-loop containing nucleotide triphosphate hydrolases"/>
    <property type="match status" value="1"/>
</dbReference>
<dbReference type="HAMAP" id="MF_01454">
    <property type="entry name" value="GTPase_Obg"/>
    <property type="match status" value="1"/>
</dbReference>
<dbReference type="InterPro" id="IPR031167">
    <property type="entry name" value="G_OBG"/>
</dbReference>
<dbReference type="InterPro" id="IPR006073">
    <property type="entry name" value="GTP-bd"/>
</dbReference>
<dbReference type="InterPro" id="IPR014100">
    <property type="entry name" value="GTP-bd_Obg/CgtA"/>
</dbReference>
<dbReference type="InterPro" id="IPR006074">
    <property type="entry name" value="GTP1-OBG_CS"/>
</dbReference>
<dbReference type="InterPro" id="IPR006169">
    <property type="entry name" value="GTP1_OBG_dom"/>
</dbReference>
<dbReference type="InterPro" id="IPR036726">
    <property type="entry name" value="GTP1_OBG_dom_sf"/>
</dbReference>
<dbReference type="InterPro" id="IPR045086">
    <property type="entry name" value="OBG_GTPase"/>
</dbReference>
<dbReference type="InterPro" id="IPR027417">
    <property type="entry name" value="P-loop_NTPase"/>
</dbReference>
<dbReference type="NCBIfam" id="TIGR02729">
    <property type="entry name" value="Obg_CgtA"/>
    <property type="match status" value="1"/>
</dbReference>
<dbReference type="NCBIfam" id="NF008955">
    <property type="entry name" value="PRK12297.1"/>
    <property type="match status" value="1"/>
</dbReference>
<dbReference type="NCBIfam" id="NF008956">
    <property type="entry name" value="PRK12299.1"/>
    <property type="match status" value="1"/>
</dbReference>
<dbReference type="PANTHER" id="PTHR11702">
    <property type="entry name" value="DEVELOPMENTALLY REGULATED GTP-BINDING PROTEIN-RELATED"/>
    <property type="match status" value="1"/>
</dbReference>
<dbReference type="PANTHER" id="PTHR11702:SF31">
    <property type="entry name" value="MITOCHONDRIAL RIBOSOME-ASSOCIATED GTPASE 2"/>
    <property type="match status" value="1"/>
</dbReference>
<dbReference type="Pfam" id="PF01018">
    <property type="entry name" value="GTP1_OBG"/>
    <property type="match status" value="1"/>
</dbReference>
<dbReference type="Pfam" id="PF01926">
    <property type="entry name" value="MMR_HSR1"/>
    <property type="match status" value="1"/>
</dbReference>
<dbReference type="PIRSF" id="PIRSF002401">
    <property type="entry name" value="GTP_bd_Obg/CgtA"/>
    <property type="match status" value="1"/>
</dbReference>
<dbReference type="PRINTS" id="PR00326">
    <property type="entry name" value="GTP1OBG"/>
</dbReference>
<dbReference type="SUPFAM" id="SSF82051">
    <property type="entry name" value="Obg GTP-binding protein N-terminal domain"/>
    <property type="match status" value="1"/>
</dbReference>
<dbReference type="SUPFAM" id="SSF52540">
    <property type="entry name" value="P-loop containing nucleoside triphosphate hydrolases"/>
    <property type="match status" value="1"/>
</dbReference>
<dbReference type="PROSITE" id="PS51710">
    <property type="entry name" value="G_OBG"/>
    <property type="match status" value="1"/>
</dbReference>
<dbReference type="PROSITE" id="PS00905">
    <property type="entry name" value="GTP1_OBG"/>
    <property type="match status" value="1"/>
</dbReference>
<dbReference type="PROSITE" id="PS51883">
    <property type="entry name" value="OBG"/>
    <property type="match status" value="1"/>
</dbReference>
<name>OBG_BORBR</name>
<keyword id="KW-0963">Cytoplasm</keyword>
<keyword id="KW-0342">GTP-binding</keyword>
<keyword id="KW-0378">Hydrolase</keyword>
<keyword id="KW-0460">Magnesium</keyword>
<keyword id="KW-0479">Metal-binding</keyword>
<keyword id="KW-0547">Nucleotide-binding</keyword>
<gene>
    <name evidence="1" type="primary">obg</name>
    <name type="ordered locus">BB0312</name>
</gene>
<proteinExistence type="inferred from homology"/>
<protein>
    <recommendedName>
        <fullName evidence="1">GTPase Obg</fullName>
        <ecNumber evidence="1">3.6.5.-</ecNumber>
    </recommendedName>
    <alternativeName>
        <fullName evidence="1">GTP-binding protein Obg</fullName>
    </alternativeName>
</protein>
<organism>
    <name type="scientific">Bordetella bronchiseptica (strain ATCC BAA-588 / NCTC 13252 / RB50)</name>
    <name type="common">Alcaligenes bronchisepticus</name>
    <dbReference type="NCBI Taxonomy" id="257310"/>
    <lineage>
        <taxon>Bacteria</taxon>
        <taxon>Pseudomonadati</taxon>
        <taxon>Pseudomonadota</taxon>
        <taxon>Betaproteobacteria</taxon>
        <taxon>Burkholderiales</taxon>
        <taxon>Alcaligenaceae</taxon>
        <taxon>Bordetella</taxon>
    </lineage>
</organism>
<reference key="1">
    <citation type="journal article" date="2003" name="Nat. Genet.">
        <title>Comparative analysis of the genome sequences of Bordetella pertussis, Bordetella parapertussis and Bordetella bronchiseptica.</title>
        <authorList>
            <person name="Parkhill J."/>
            <person name="Sebaihia M."/>
            <person name="Preston A."/>
            <person name="Murphy L.D."/>
            <person name="Thomson N.R."/>
            <person name="Harris D.E."/>
            <person name="Holden M.T.G."/>
            <person name="Churcher C.M."/>
            <person name="Bentley S.D."/>
            <person name="Mungall K.L."/>
            <person name="Cerdeno-Tarraga A.-M."/>
            <person name="Temple L."/>
            <person name="James K.D."/>
            <person name="Harris B."/>
            <person name="Quail M.A."/>
            <person name="Achtman M."/>
            <person name="Atkin R."/>
            <person name="Baker S."/>
            <person name="Basham D."/>
            <person name="Bason N."/>
            <person name="Cherevach I."/>
            <person name="Chillingworth T."/>
            <person name="Collins M."/>
            <person name="Cronin A."/>
            <person name="Davis P."/>
            <person name="Doggett J."/>
            <person name="Feltwell T."/>
            <person name="Goble A."/>
            <person name="Hamlin N."/>
            <person name="Hauser H."/>
            <person name="Holroyd S."/>
            <person name="Jagels K."/>
            <person name="Leather S."/>
            <person name="Moule S."/>
            <person name="Norberczak H."/>
            <person name="O'Neil S."/>
            <person name="Ormond D."/>
            <person name="Price C."/>
            <person name="Rabbinowitsch E."/>
            <person name="Rutter S."/>
            <person name="Sanders M."/>
            <person name="Saunders D."/>
            <person name="Seeger K."/>
            <person name="Sharp S."/>
            <person name="Simmonds M."/>
            <person name="Skelton J."/>
            <person name="Squares R."/>
            <person name="Squares S."/>
            <person name="Stevens K."/>
            <person name="Unwin L."/>
            <person name="Whitehead S."/>
            <person name="Barrell B.G."/>
            <person name="Maskell D.J."/>
        </authorList>
    </citation>
    <scope>NUCLEOTIDE SEQUENCE [LARGE SCALE GENOMIC DNA]</scope>
    <source>
        <strain>ATCC BAA-588 / NCTC 13252 / RB50</strain>
    </source>
</reference>
<comment type="function">
    <text evidence="1">An essential GTPase which binds GTP, GDP and possibly (p)ppGpp with moderate affinity, with high nucleotide exchange rates and a fairly low GTP hydrolysis rate. Plays a role in control of the cell cycle, stress response, ribosome biogenesis and in those bacteria that undergo differentiation, in morphogenesis control.</text>
</comment>
<comment type="cofactor">
    <cofactor evidence="1">
        <name>Mg(2+)</name>
        <dbReference type="ChEBI" id="CHEBI:18420"/>
    </cofactor>
</comment>
<comment type="subunit">
    <text evidence="1">Monomer.</text>
</comment>
<comment type="subcellular location">
    <subcellularLocation>
        <location evidence="1">Cytoplasm</location>
    </subcellularLocation>
</comment>
<comment type="similarity">
    <text evidence="1">Belongs to the TRAFAC class OBG-HflX-like GTPase superfamily. OBG GTPase family.</text>
</comment>